<comment type="function">
    <text evidence="1">This is one of the proteins that bind and probably mediate the attachment of the 5S RNA into the large ribosomal subunit, where it forms part of the central protuberance.</text>
</comment>
<comment type="subunit">
    <text evidence="1">Part of the 50S ribosomal subunit; part of the 5S rRNA/L5/L18/L25 subcomplex. Contacts the 5S and 23S rRNAs.</text>
</comment>
<comment type="similarity">
    <text evidence="1">Belongs to the universal ribosomal protein uL18 family.</text>
</comment>
<accession>Q0AUJ6</accession>
<dbReference type="EMBL" id="CP000448">
    <property type="protein sequence ID" value="ABI69608.1"/>
    <property type="molecule type" value="Genomic_DNA"/>
</dbReference>
<dbReference type="RefSeq" id="WP_011641692.1">
    <property type="nucleotide sequence ID" value="NC_008346.1"/>
</dbReference>
<dbReference type="SMR" id="Q0AUJ6"/>
<dbReference type="STRING" id="335541.Swol_2317"/>
<dbReference type="KEGG" id="swo:Swol_2317"/>
<dbReference type="eggNOG" id="COG0256">
    <property type="taxonomic scope" value="Bacteria"/>
</dbReference>
<dbReference type="HOGENOM" id="CLU_098841_0_1_9"/>
<dbReference type="OrthoDB" id="9810939at2"/>
<dbReference type="Proteomes" id="UP000001968">
    <property type="component" value="Chromosome"/>
</dbReference>
<dbReference type="GO" id="GO:0022625">
    <property type="term" value="C:cytosolic large ribosomal subunit"/>
    <property type="evidence" value="ECO:0007669"/>
    <property type="project" value="TreeGrafter"/>
</dbReference>
<dbReference type="GO" id="GO:0008097">
    <property type="term" value="F:5S rRNA binding"/>
    <property type="evidence" value="ECO:0007669"/>
    <property type="project" value="TreeGrafter"/>
</dbReference>
<dbReference type="GO" id="GO:0003735">
    <property type="term" value="F:structural constituent of ribosome"/>
    <property type="evidence" value="ECO:0007669"/>
    <property type="project" value="InterPro"/>
</dbReference>
<dbReference type="GO" id="GO:0006412">
    <property type="term" value="P:translation"/>
    <property type="evidence" value="ECO:0007669"/>
    <property type="project" value="UniProtKB-UniRule"/>
</dbReference>
<dbReference type="CDD" id="cd00432">
    <property type="entry name" value="Ribosomal_L18_L5e"/>
    <property type="match status" value="1"/>
</dbReference>
<dbReference type="FunFam" id="3.30.420.100:FF:000001">
    <property type="entry name" value="50S ribosomal protein L18"/>
    <property type="match status" value="1"/>
</dbReference>
<dbReference type="Gene3D" id="3.30.420.100">
    <property type="match status" value="1"/>
</dbReference>
<dbReference type="HAMAP" id="MF_01337_B">
    <property type="entry name" value="Ribosomal_uL18_B"/>
    <property type="match status" value="1"/>
</dbReference>
<dbReference type="InterPro" id="IPR004389">
    <property type="entry name" value="Ribosomal_uL18_bac-type"/>
</dbReference>
<dbReference type="InterPro" id="IPR005484">
    <property type="entry name" value="Ribosomal_uL18_bac/euk"/>
</dbReference>
<dbReference type="NCBIfam" id="TIGR00060">
    <property type="entry name" value="L18_bact"/>
    <property type="match status" value="1"/>
</dbReference>
<dbReference type="PANTHER" id="PTHR12899">
    <property type="entry name" value="39S RIBOSOMAL PROTEIN L18, MITOCHONDRIAL"/>
    <property type="match status" value="1"/>
</dbReference>
<dbReference type="PANTHER" id="PTHR12899:SF3">
    <property type="entry name" value="LARGE RIBOSOMAL SUBUNIT PROTEIN UL18M"/>
    <property type="match status" value="1"/>
</dbReference>
<dbReference type="Pfam" id="PF00861">
    <property type="entry name" value="Ribosomal_L18p"/>
    <property type="match status" value="1"/>
</dbReference>
<dbReference type="SUPFAM" id="SSF53137">
    <property type="entry name" value="Translational machinery components"/>
    <property type="match status" value="1"/>
</dbReference>
<name>RL18_SYNWW</name>
<reference key="1">
    <citation type="journal article" date="2010" name="Environ. Microbiol.">
        <title>The genome of Syntrophomonas wolfei: new insights into syntrophic metabolism and biohydrogen production.</title>
        <authorList>
            <person name="Sieber J.R."/>
            <person name="Sims D.R."/>
            <person name="Han C."/>
            <person name="Kim E."/>
            <person name="Lykidis A."/>
            <person name="Lapidus A.L."/>
            <person name="McDonnald E."/>
            <person name="Rohlin L."/>
            <person name="Culley D.E."/>
            <person name="Gunsalus R."/>
            <person name="McInerney M.J."/>
        </authorList>
    </citation>
    <scope>NUCLEOTIDE SEQUENCE [LARGE SCALE GENOMIC DNA]</scope>
    <source>
        <strain>DSM 2245B / Goettingen</strain>
    </source>
</reference>
<evidence type="ECO:0000255" key="1">
    <source>
        <dbReference type="HAMAP-Rule" id="MF_01337"/>
    </source>
</evidence>
<evidence type="ECO:0000256" key="2">
    <source>
        <dbReference type="SAM" id="MobiDB-lite"/>
    </source>
</evidence>
<evidence type="ECO:0000305" key="3"/>
<organism>
    <name type="scientific">Syntrophomonas wolfei subsp. wolfei (strain DSM 2245B / Goettingen)</name>
    <dbReference type="NCBI Taxonomy" id="335541"/>
    <lineage>
        <taxon>Bacteria</taxon>
        <taxon>Bacillati</taxon>
        <taxon>Bacillota</taxon>
        <taxon>Clostridia</taxon>
        <taxon>Eubacteriales</taxon>
        <taxon>Syntrophomonadaceae</taxon>
        <taxon>Syntrophomonas</taxon>
    </lineage>
</organism>
<keyword id="KW-1185">Reference proteome</keyword>
<keyword id="KW-0687">Ribonucleoprotein</keyword>
<keyword id="KW-0689">Ribosomal protein</keyword>
<keyword id="KW-0694">RNA-binding</keyword>
<keyword id="KW-0699">rRNA-binding</keyword>
<proteinExistence type="inferred from homology"/>
<feature type="chain" id="PRO_1000053130" description="Large ribosomal subunit protein uL18">
    <location>
        <begin position="1"/>
        <end position="121"/>
    </location>
</feature>
<feature type="region of interest" description="Disordered" evidence="2">
    <location>
        <begin position="1"/>
        <end position="23"/>
    </location>
</feature>
<feature type="compositionally biased region" description="Basic residues" evidence="2">
    <location>
        <begin position="1"/>
        <end position="22"/>
    </location>
</feature>
<gene>
    <name evidence="1" type="primary">rplR</name>
    <name type="ordered locus">Swol_2317</name>
</gene>
<protein>
    <recommendedName>
        <fullName evidence="1">Large ribosomal subunit protein uL18</fullName>
    </recommendedName>
    <alternativeName>
        <fullName evidence="3">50S ribosomal protein L18</fullName>
    </alternativeName>
</protein>
<sequence>MIKKPDKKTLRQGKHKRVRRKVAGTGERPRLCIFKSLHHIYAQIIDDEKGVTLVAASTLEEGLKGLESKTNIAAAQEVGANIAERAREKGIIEVVFDRNGYKYHGSVAALANAAREKGLVF</sequence>